<sequence>MSSQDFDVEFVDRDDREARFVVRNITPAFANGIRRAILVDVPTLSIDTVRFVENSSVMFDEQLGLRLGLVPLTTPEDYAAGEAVTLALDVEGPGTAYSGDLVSNDPEVEAADENIPIIELKDDQRLELEADAVMGHGRDHAKHQGGVAVGYRHLQRVHVVGDSPEYADDDPQMLRGVIEEDDELVPTDDFDNDLTTRYPGKEVEIEDVDGAFVFHVESDGSMPVEELVLRAVDTLVDRADELEQAVQL</sequence>
<feature type="chain" id="PRO_0000132753" description="DNA-directed RNA polymerase subunit Rpo3">
    <location>
        <begin position="1"/>
        <end position="248"/>
    </location>
</feature>
<feature type="sequence conflict" description="In Ref. 1; BAA85898." evidence="2" ref="1">
    <original>A</original>
    <variation>P</variation>
    <location>
        <position position="79"/>
    </location>
</feature>
<feature type="sequence conflict" description="In Ref. 1; BAA85898." evidence="2" ref="1">
    <location>
        <position position="83"/>
    </location>
</feature>
<feature type="sequence conflict" description="In Ref. 1; BAA85898." evidence="2" ref="1">
    <original>S</original>
    <variation>P</variation>
    <location>
        <position position="98"/>
    </location>
</feature>
<feature type="sequence conflict" description="In Ref. 1; BAA85898." evidence="2" ref="1">
    <original>M</original>
    <variation>D</variation>
    <location>
        <position position="134"/>
    </location>
</feature>
<feature type="sequence conflict" description="In Ref. 1; BAA85898." evidence="2" ref="1">
    <original>Q</original>
    <variation>QLQ</variation>
    <location>
        <position position="155"/>
    </location>
</feature>
<evidence type="ECO:0000255" key="1">
    <source>
        <dbReference type="HAMAP-Rule" id="MF_00320"/>
    </source>
</evidence>
<evidence type="ECO:0000305" key="2"/>
<comment type="function">
    <text evidence="1">DNA-dependent RNA polymerase (RNAP) catalyzes the transcription of DNA into RNA using the four ribonucleoside triphosphates as substrates.</text>
</comment>
<comment type="catalytic activity">
    <reaction evidence="1">
        <text>RNA(n) + a ribonucleoside 5'-triphosphate = RNA(n+1) + diphosphate</text>
        <dbReference type="Rhea" id="RHEA:21248"/>
        <dbReference type="Rhea" id="RHEA-COMP:14527"/>
        <dbReference type="Rhea" id="RHEA-COMP:17342"/>
        <dbReference type="ChEBI" id="CHEBI:33019"/>
        <dbReference type="ChEBI" id="CHEBI:61557"/>
        <dbReference type="ChEBI" id="CHEBI:140395"/>
        <dbReference type="EC" id="2.7.7.6"/>
    </reaction>
</comment>
<comment type="subunit">
    <text evidence="1">Part of the RNA polymerase complex.</text>
</comment>
<comment type="subcellular location">
    <subcellularLocation>
        <location evidence="1">Cytoplasm</location>
    </subcellularLocation>
</comment>
<comment type="similarity">
    <text evidence="1">Belongs to the archaeal Rpo3/eukaryotic RPB3 RNA polymerase subunit family.</text>
</comment>
<reference key="1">
    <citation type="journal article" date="1999" name="Biochem. Biophys. Res. Commun.">
        <title>Cloning, sequencing, and characterization of ribosomal protein and RNA polymerase genes from the region analogous to the alpha-operon of Escherichia coli in halophilic archaea, Halobacterium halobium.</title>
        <authorList>
            <person name="Sano K."/>
            <person name="Taguchi A."/>
            <person name="Furumoto H."/>
            <person name="Uda T."/>
            <person name="Itoh T."/>
        </authorList>
    </citation>
    <scope>NUCLEOTIDE SEQUENCE [GENOMIC DNA]</scope>
    <source>
        <strain>R1 / S9</strain>
    </source>
</reference>
<reference key="2">
    <citation type="journal article" date="2000" name="Proc. Natl. Acad. Sci. U.S.A.">
        <title>Genome sequence of Halobacterium species NRC-1.</title>
        <authorList>
            <person name="Ng W.V."/>
            <person name="Kennedy S.P."/>
            <person name="Mahairas G.G."/>
            <person name="Berquist B."/>
            <person name="Pan M."/>
            <person name="Shukla H.D."/>
            <person name="Lasky S.R."/>
            <person name="Baliga N.S."/>
            <person name="Thorsson V."/>
            <person name="Sbrogna J."/>
            <person name="Swartzell S."/>
            <person name="Weir D."/>
            <person name="Hall J."/>
            <person name="Dahl T.A."/>
            <person name="Welti R."/>
            <person name="Goo Y.A."/>
            <person name="Leithauser B."/>
            <person name="Keller K."/>
            <person name="Cruz R."/>
            <person name="Danson M.J."/>
            <person name="Hough D.W."/>
            <person name="Maddocks D.G."/>
            <person name="Jablonski P.E."/>
            <person name="Krebs M.P."/>
            <person name="Angevine C.M."/>
            <person name="Dale H."/>
            <person name="Isenbarger T.A."/>
            <person name="Peck R.F."/>
            <person name="Pohlschroder M."/>
            <person name="Spudich J.L."/>
            <person name="Jung K.-H."/>
            <person name="Alam M."/>
            <person name="Freitas T."/>
            <person name="Hou S."/>
            <person name="Daniels C.J."/>
            <person name="Dennis P.P."/>
            <person name="Omer A.D."/>
            <person name="Ebhardt H."/>
            <person name="Lowe T.M."/>
            <person name="Liang P."/>
            <person name="Riley M."/>
            <person name="Hood L."/>
            <person name="DasSarma S."/>
        </authorList>
    </citation>
    <scope>NUCLEOTIDE SEQUENCE [LARGE SCALE GENOMIC DNA]</scope>
    <source>
        <strain>ATCC 700922 / JCM 11081 / NRC-1</strain>
    </source>
</reference>
<protein>
    <recommendedName>
        <fullName evidence="1">DNA-directed RNA polymerase subunit Rpo3</fullName>
        <ecNumber evidence="1">2.7.7.6</ecNumber>
    </recommendedName>
    <alternativeName>
        <fullName evidence="1">DNA-directed RNA polymerase subunit D</fullName>
    </alternativeName>
</protein>
<accession>Q9HQJ4</accession>
<accession>Q9V2W1</accession>
<organism>
    <name type="scientific">Halobacterium salinarum (strain ATCC 700922 / JCM 11081 / NRC-1)</name>
    <name type="common">Halobacterium halobium</name>
    <dbReference type="NCBI Taxonomy" id="64091"/>
    <lineage>
        <taxon>Archaea</taxon>
        <taxon>Methanobacteriati</taxon>
        <taxon>Methanobacteriota</taxon>
        <taxon>Stenosarchaea group</taxon>
        <taxon>Halobacteria</taxon>
        <taxon>Halobacteriales</taxon>
        <taxon>Halobacteriaceae</taxon>
        <taxon>Halobacterium</taxon>
        <taxon>Halobacterium salinarum NRC-34001</taxon>
    </lineage>
</organism>
<proteinExistence type="inferred from homology"/>
<name>RPO3_HALSA</name>
<gene>
    <name evidence="1" type="primary">rpo3</name>
    <name evidence="1" type="synonym">rpoD</name>
    <name type="ordered locus">VNG_1136G</name>
</gene>
<dbReference type="EC" id="2.7.7.6" evidence="1"/>
<dbReference type="EMBL" id="AB030282">
    <property type="protein sequence ID" value="BAA85898.1"/>
    <property type="molecule type" value="Genomic_DNA"/>
</dbReference>
<dbReference type="EMBL" id="AE004437">
    <property type="protein sequence ID" value="AAG19520.1"/>
    <property type="molecule type" value="Genomic_DNA"/>
</dbReference>
<dbReference type="PIR" id="D84269">
    <property type="entry name" value="D84269"/>
</dbReference>
<dbReference type="PIR" id="T43940">
    <property type="entry name" value="T43940"/>
</dbReference>
<dbReference type="RefSeq" id="WP_010902815.1">
    <property type="nucleotide sequence ID" value="NC_002607.1"/>
</dbReference>
<dbReference type="SMR" id="Q9HQJ4"/>
<dbReference type="STRING" id="64091.VNG_1136G"/>
<dbReference type="PaxDb" id="64091-VNG_1136G"/>
<dbReference type="KEGG" id="hal:VNG_1136G"/>
<dbReference type="PATRIC" id="fig|64091.14.peg.866"/>
<dbReference type="HOGENOM" id="CLU_038421_3_1_2"/>
<dbReference type="InParanoid" id="Q9HQJ4"/>
<dbReference type="OrthoDB" id="84933at2157"/>
<dbReference type="PhylomeDB" id="Q9HQJ4"/>
<dbReference type="Proteomes" id="UP000000554">
    <property type="component" value="Chromosome"/>
</dbReference>
<dbReference type="GO" id="GO:0005737">
    <property type="term" value="C:cytoplasm"/>
    <property type="evidence" value="ECO:0007669"/>
    <property type="project" value="UniProtKB-SubCell"/>
</dbReference>
<dbReference type="GO" id="GO:0000428">
    <property type="term" value="C:DNA-directed RNA polymerase complex"/>
    <property type="evidence" value="ECO:0007669"/>
    <property type="project" value="UniProtKB-KW"/>
</dbReference>
<dbReference type="GO" id="GO:0003677">
    <property type="term" value="F:DNA binding"/>
    <property type="evidence" value="ECO:0007669"/>
    <property type="project" value="UniProtKB-UniRule"/>
</dbReference>
<dbReference type="GO" id="GO:0003899">
    <property type="term" value="F:DNA-directed RNA polymerase activity"/>
    <property type="evidence" value="ECO:0007669"/>
    <property type="project" value="UniProtKB-UniRule"/>
</dbReference>
<dbReference type="GO" id="GO:0046983">
    <property type="term" value="F:protein dimerization activity"/>
    <property type="evidence" value="ECO:0007669"/>
    <property type="project" value="InterPro"/>
</dbReference>
<dbReference type="GO" id="GO:0006351">
    <property type="term" value="P:DNA-templated transcription"/>
    <property type="evidence" value="ECO:0007669"/>
    <property type="project" value="UniProtKB-UniRule"/>
</dbReference>
<dbReference type="Gene3D" id="3.30.70.3110">
    <property type="match status" value="1"/>
</dbReference>
<dbReference type="Gene3D" id="2.170.120.12">
    <property type="entry name" value="DNA-directed RNA polymerase, insert domain"/>
    <property type="match status" value="1"/>
</dbReference>
<dbReference type="Gene3D" id="3.30.1360.10">
    <property type="entry name" value="RNA polymerase, RBP11-like subunit"/>
    <property type="match status" value="1"/>
</dbReference>
<dbReference type="HAMAP" id="MF_00320">
    <property type="entry name" value="RNApol_arch_Rpo3"/>
    <property type="match status" value="1"/>
</dbReference>
<dbReference type="InterPro" id="IPR001514">
    <property type="entry name" value="DNA-dir_RNA_pol_30-40kDasu_CS"/>
</dbReference>
<dbReference type="InterPro" id="IPR011262">
    <property type="entry name" value="DNA-dir_RNA_pol_insert"/>
</dbReference>
<dbReference type="InterPro" id="IPR011263">
    <property type="entry name" value="DNA-dir_RNA_pol_RpoA/D/Rpb3"/>
</dbReference>
<dbReference type="InterPro" id="IPR036603">
    <property type="entry name" value="RBP11-like"/>
</dbReference>
<dbReference type="InterPro" id="IPR022842">
    <property type="entry name" value="RNAP_Rpo3/Rpb3/RPAC1"/>
</dbReference>
<dbReference type="InterPro" id="IPR036643">
    <property type="entry name" value="RNApol_insert_sf"/>
</dbReference>
<dbReference type="InterPro" id="IPR050518">
    <property type="entry name" value="Rpo3/RPB3_RNA_Pol_subunit"/>
</dbReference>
<dbReference type="NCBIfam" id="NF001988">
    <property type="entry name" value="PRK00783.1"/>
    <property type="match status" value="1"/>
</dbReference>
<dbReference type="PANTHER" id="PTHR11800">
    <property type="entry name" value="DNA-DIRECTED RNA POLYMERASE"/>
    <property type="match status" value="1"/>
</dbReference>
<dbReference type="PANTHER" id="PTHR11800:SF2">
    <property type="entry name" value="DNA-DIRECTED RNA POLYMERASE II SUBUNIT RPB3"/>
    <property type="match status" value="1"/>
</dbReference>
<dbReference type="Pfam" id="PF01000">
    <property type="entry name" value="RNA_pol_A_bac"/>
    <property type="match status" value="1"/>
</dbReference>
<dbReference type="Pfam" id="PF01193">
    <property type="entry name" value="RNA_pol_L"/>
    <property type="match status" value="1"/>
</dbReference>
<dbReference type="SMART" id="SM00662">
    <property type="entry name" value="RPOLD"/>
    <property type="match status" value="1"/>
</dbReference>
<dbReference type="SUPFAM" id="SSF56553">
    <property type="entry name" value="Insert subdomain of RNA polymerase alpha subunit"/>
    <property type="match status" value="1"/>
</dbReference>
<dbReference type="SUPFAM" id="SSF55257">
    <property type="entry name" value="RBP11-like subunits of RNA polymerase"/>
    <property type="match status" value="1"/>
</dbReference>
<dbReference type="PROSITE" id="PS00446">
    <property type="entry name" value="RNA_POL_D_30KD"/>
    <property type="match status" value="1"/>
</dbReference>
<keyword id="KW-0963">Cytoplasm</keyword>
<keyword id="KW-0240">DNA-directed RNA polymerase</keyword>
<keyword id="KW-0548">Nucleotidyltransferase</keyword>
<keyword id="KW-1185">Reference proteome</keyword>
<keyword id="KW-0804">Transcription</keyword>
<keyword id="KW-0808">Transferase</keyword>